<keyword id="KW-0378">Hydrolase</keyword>
<keyword id="KW-0441">Lipid A biosynthesis</keyword>
<keyword id="KW-0444">Lipid biosynthesis</keyword>
<keyword id="KW-0443">Lipid metabolism</keyword>
<keyword id="KW-0479">Metal-binding</keyword>
<keyword id="KW-0862">Zinc</keyword>
<feature type="chain" id="PRO_1000205804" description="UDP-3-O-acyl-N-acetylglucosamine deacetylase">
    <location>
        <begin position="1"/>
        <end position="305"/>
    </location>
</feature>
<feature type="active site" description="Proton donor" evidence="1">
    <location>
        <position position="265"/>
    </location>
</feature>
<feature type="binding site" evidence="1">
    <location>
        <position position="79"/>
    </location>
    <ligand>
        <name>Zn(2+)</name>
        <dbReference type="ChEBI" id="CHEBI:29105"/>
    </ligand>
</feature>
<feature type="binding site" evidence="1">
    <location>
        <position position="238"/>
    </location>
    <ligand>
        <name>Zn(2+)</name>
        <dbReference type="ChEBI" id="CHEBI:29105"/>
    </ligand>
</feature>
<feature type="binding site" evidence="1">
    <location>
        <position position="242"/>
    </location>
    <ligand>
        <name>Zn(2+)</name>
        <dbReference type="ChEBI" id="CHEBI:29105"/>
    </ligand>
</feature>
<reference key="1">
    <citation type="submission" date="2009-03" db="EMBL/GenBank/DDBJ databases">
        <title>Complete genome sequence of Edwardsiella ictaluri 93-146.</title>
        <authorList>
            <person name="Williams M.L."/>
            <person name="Gillaspy A.F."/>
            <person name="Dyer D.W."/>
            <person name="Thune R.L."/>
            <person name="Waldbieser G.C."/>
            <person name="Schuster S.C."/>
            <person name="Gipson J."/>
            <person name="Zaitshik J."/>
            <person name="Landry C."/>
            <person name="Lawrence M.L."/>
        </authorList>
    </citation>
    <scope>NUCLEOTIDE SEQUENCE [LARGE SCALE GENOMIC DNA]</scope>
    <source>
        <strain>93-146</strain>
    </source>
</reference>
<accession>C5B9G2</accession>
<gene>
    <name evidence="1" type="primary">lpxC</name>
    <name type="ordered locus">NT01EI_0742</name>
</gene>
<comment type="function">
    <text evidence="1">Catalyzes the hydrolysis of UDP-3-O-myristoyl-N-acetylglucosamine to form UDP-3-O-myristoylglucosamine and acetate, the committed step in lipid A biosynthesis.</text>
</comment>
<comment type="catalytic activity">
    <reaction evidence="1">
        <text>a UDP-3-O-[(3R)-3-hydroxyacyl]-N-acetyl-alpha-D-glucosamine + H2O = a UDP-3-O-[(3R)-3-hydroxyacyl]-alpha-D-glucosamine + acetate</text>
        <dbReference type="Rhea" id="RHEA:67816"/>
        <dbReference type="ChEBI" id="CHEBI:15377"/>
        <dbReference type="ChEBI" id="CHEBI:30089"/>
        <dbReference type="ChEBI" id="CHEBI:137740"/>
        <dbReference type="ChEBI" id="CHEBI:173225"/>
        <dbReference type="EC" id="3.5.1.108"/>
    </reaction>
</comment>
<comment type="cofactor">
    <cofactor evidence="1">
        <name>Zn(2+)</name>
        <dbReference type="ChEBI" id="CHEBI:29105"/>
    </cofactor>
</comment>
<comment type="pathway">
    <text evidence="1">Glycolipid biosynthesis; lipid IV(A) biosynthesis; lipid IV(A) from (3R)-3-hydroxytetradecanoyl-[acyl-carrier-protein] and UDP-N-acetyl-alpha-D-glucosamine: step 2/6.</text>
</comment>
<comment type="similarity">
    <text evidence="1">Belongs to the LpxC family.</text>
</comment>
<sequence>MIKQRTIKRIVQATGVGLHTGKKVTLTMRPAAANTGIIYRRTDLNPPVDFPADAKSVRDTMLCTCLVNEHDVRISTVEHLNAALAGLGIDNLVIEVDAAEIPIMDGSAAPFVFLLLDAGIDELKCAKKFLRLKEAVRVEDGDKWAELAPYNGFSLDFTIDFNHPAIDASTQRYSLDFSADAFVRQISRARTFGFMRDIEYLQSRGLCLGGSFDCAIVVDDYRVLNEDGLRFEDEFVRHKMLDAIGDLFMCGHNIIGAFTAFKSGHALNNRLLQTVLAKQEAWELVTFEDGEEMPLAFRAPSAVLA</sequence>
<protein>
    <recommendedName>
        <fullName evidence="1">UDP-3-O-acyl-N-acetylglucosamine deacetylase</fullName>
        <shortName evidence="1">UDP-3-O-acyl-GlcNAc deacetylase</shortName>
        <ecNumber evidence="1">3.5.1.108</ecNumber>
    </recommendedName>
    <alternativeName>
        <fullName evidence="1">UDP-3-O-[R-3-hydroxymyristoyl]-N-acetylglucosamine deacetylase</fullName>
    </alternativeName>
</protein>
<proteinExistence type="inferred from homology"/>
<dbReference type="EC" id="3.5.1.108" evidence="1"/>
<dbReference type="EMBL" id="CP001600">
    <property type="protein sequence ID" value="ACR67963.1"/>
    <property type="molecule type" value="Genomic_DNA"/>
</dbReference>
<dbReference type="RefSeq" id="WP_015870156.1">
    <property type="nucleotide sequence ID" value="NZ_CP169062.1"/>
</dbReference>
<dbReference type="SMR" id="C5B9G2"/>
<dbReference type="STRING" id="67780.B6E78_14340"/>
<dbReference type="GeneID" id="69537803"/>
<dbReference type="KEGG" id="eic:NT01EI_0742"/>
<dbReference type="PATRIC" id="fig|634503.3.peg.670"/>
<dbReference type="HOGENOM" id="CLU_046528_1_0_6"/>
<dbReference type="OrthoDB" id="9802746at2"/>
<dbReference type="UniPathway" id="UPA00359">
    <property type="reaction ID" value="UER00478"/>
</dbReference>
<dbReference type="Proteomes" id="UP000001485">
    <property type="component" value="Chromosome"/>
</dbReference>
<dbReference type="GO" id="GO:0016020">
    <property type="term" value="C:membrane"/>
    <property type="evidence" value="ECO:0007669"/>
    <property type="project" value="GOC"/>
</dbReference>
<dbReference type="GO" id="GO:0046872">
    <property type="term" value="F:metal ion binding"/>
    <property type="evidence" value="ECO:0007669"/>
    <property type="project" value="UniProtKB-KW"/>
</dbReference>
<dbReference type="GO" id="GO:0103117">
    <property type="term" value="F:UDP-3-O-acyl-N-acetylglucosamine deacetylase activity"/>
    <property type="evidence" value="ECO:0007669"/>
    <property type="project" value="UniProtKB-UniRule"/>
</dbReference>
<dbReference type="GO" id="GO:0009245">
    <property type="term" value="P:lipid A biosynthetic process"/>
    <property type="evidence" value="ECO:0007669"/>
    <property type="project" value="UniProtKB-UniRule"/>
</dbReference>
<dbReference type="FunFam" id="3.30.1700.10:FF:000001">
    <property type="entry name" value="UDP-3-O-acyl-N-acetylglucosamine deacetylase"/>
    <property type="match status" value="1"/>
</dbReference>
<dbReference type="FunFam" id="3.30.230.20:FF:000001">
    <property type="entry name" value="UDP-3-O-acyl-N-acetylglucosamine deacetylase"/>
    <property type="match status" value="1"/>
</dbReference>
<dbReference type="Gene3D" id="3.30.230.20">
    <property type="entry name" value="lpxc deacetylase, domain 1"/>
    <property type="match status" value="1"/>
</dbReference>
<dbReference type="Gene3D" id="3.30.1700.10">
    <property type="entry name" value="lpxc deacetylase, domain 2"/>
    <property type="match status" value="1"/>
</dbReference>
<dbReference type="HAMAP" id="MF_00388">
    <property type="entry name" value="LpxC"/>
    <property type="match status" value="1"/>
</dbReference>
<dbReference type="InterPro" id="IPR020568">
    <property type="entry name" value="Ribosomal_Su5_D2-typ_SF"/>
</dbReference>
<dbReference type="InterPro" id="IPR004463">
    <property type="entry name" value="UDP-acyl_GlcNac_deAcase"/>
</dbReference>
<dbReference type="InterPro" id="IPR011334">
    <property type="entry name" value="UDP-acyl_GlcNac_deAcase_C"/>
</dbReference>
<dbReference type="InterPro" id="IPR015870">
    <property type="entry name" value="UDP-acyl_N-AcGlcN_deAcase_N"/>
</dbReference>
<dbReference type="NCBIfam" id="TIGR00325">
    <property type="entry name" value="lpxC"/>
    <property type="match status" value="1"/>
</dbReference>
<dbReference type="PANTHER" id="PTHR33694">
    <property type="entry name" value="UDP-3-O-ACYL-N-ACETYLGLUCOSAMINE DEACETYLASE 1, MITOCHONDRIAL-RELATED"/>
    <property type="match status" value="1"/>
</dbReference>
<dbReference type="PANTHER" id="PTHR33694:SF1">
    <property type="entry name" value="UDP-3-O-ACYL-N-ACETYLGLUCOSAMINE DEACETYLASE 1, MITOCHONDRIAL-RELATED"/>
    <property type="match status" value="1"/>
</dbReference>
<dbReference type="Pfam" id="PF03331">
    <property type="entry name" value="LpxC"/>
    <property type="match status" value="1"/>
</dbReference>
<dbReference type="SUPFAM" id="SSF54211">
    <property type="entry name" value="Ribosomal protein S5 domain 2-like"/>
    <property type="match status" value="2"/>
</dbReference>
<organism>
    <name type="scientific">Edwardsiella ictaluri (strain 93-146)</name>
    <dbReference type="NCBI Taxonomy" id="634503"/>
    <lineage>
        <taxon>Bacteria</taxon>
        <taxon>Pseudomonadati</taxon>
        <taxon>Pseudomonadota</taxon>
        <taxon>Gammaproteobacteria</taxon>
        <taxon>Enterobacterales</taxon>
        <taxon>Hafniaceae</taxon>
        <taxon>Edwardsiella</taxon>
    </lineage>
</organism>
<name>LPXC_EDWI9</name>
<evidence type="ECO:0000255" key="1">
    <source>
        <dbReference type="HAMAP-Rule" id="MF_00388"/>
    </source>
</evidence>